<comment type="function">
    <text evidence="2 4">Possible component of 1,2-phenylacetyl-CoA epoxidase multicomponent enzyme system which catalyzes the reduction of phenylacetyl-CoA (PA-CoA) to form 1,2-epoxyphenylacetyl-CoA. The subunit D may have a function related to the maturation of the monooxygenase complex, rather than direct involvement in catalysis. PaaD could assist either in maturation of PaaE or PaaA.</text>
</comment>
<comment type="pathway">
    <text>Aromatic compound metabolism; phenylacetate degradation.</text>
</comment>
<comment type="subunit">
    <text evidence="3">Monomer.</text>
</comment>
<comment type="induction">
    <text evidence="1 4">Activated by cAMP receptor protein (CRP), integration host factor (IHF) and by phenylacetyl-coenzyme A (PA-CoA) that prevents PaaX from binding its target sequences. Inhibited by PaaX.</text>
</comment>
<comment type="miscellaneous">
    <text>PaaD component is not essential for the reaction in vitro.</text>
</comment>
<comment type="sequence caution" evidence="5">
    <conflict type="erroneous initiation">
        <sequence resource="EMBL-CDS" id="CAA66093"/>
    </conflict>
    <text>Extended N-terminus.</text>
</comment>
<name>PAAD_ECOLI</name>
<gene>
    <name type="primary">paaD</name>
    <name type="synonym">ydbQ</name>
    <name type="ordered locus">b1391</name>
    <name type="ordered locus">JW5217</name>
</gene>
<accession>P76080</accession>
<accession>O53012</accession>
<accession>Q2MBD0</accession>
<organism>
    <name type="scientific">Escherichia coli (strain K12)</name>
    <dbReference type="NCBI Taxonomy" id="83333"/>
    <lineage>
        <taxon>Bacteria</taxon>
        <taxon>Pseudomonadati</taxon>
        <taxon>Pseudomonadota</taxon>
        <taxon>Gammaproteobacteria</taxon>
        <taxon>Enterobacterales</taxon>
        <taxon>Enterobacteriaceae</taxon>
        <taxon>Escherichia</taxon>
    </lineage>
</organism>
<dbReference type="EMBL" id="X97452">
    <property type="protein sequence ID" value="CAA66093.1"/>
    <property type="status" value="ALT_INIT"/>
    <property type="molecule type" value="Genomic_DNA"/>
</dbReference>
<dbReference type="EMBL" id="U00096">
    <property type="protein sequence ID" value="AAC74473.4"/>
    <property type="molecule type" value="Genomic_DNA"/>
</dbReference>
<dbReference type="EMBL" id="AP009048">
    <property type="protein sequence ID" value="BAE76426.1"/>
    <property type="molecule type" value="Genomic_DNA"/>
</dbReference>
<dbReference type="PIR" id="B64890">
    <property type="entry name" value="B64890"/>
</dbReference>
<dbReference type="RefSeq" id="NP_415909.4">
    <property type="nucleotide sequence ID" value="NC_000913.3"/>
</dbReference>
<dbReference type="RefSeq" id="WP_001189201.1">
    <property type="nucleotide sequence ID" value="NZ_SSZK01000012.1"/>
</dbReference>
<dbReference type="SMR" id="P76080"/>
<dbReference type="BioGRID" id="4262886">
    <property type="interactions" value="119"/>
</dbReference>
<dbReference type="BioGRID" id="850322">
    <property type="interactions" value="4"/>
</dbReference>
<dbReference type="FunCoup" id="P76080">
    <property type="interactions" value="198"/>
</dbReference>
<dbReference type="IntAct" id="P76080">
    <property type="interactions" value="4"/>
</dbReference>
<dbReference type="STRING" id="511145.b1391"/>
<dbReference type="PaxDb" id="511145-b1391"/>
<dbReference type="EnsemblBacteria" id="AAC74473">
    <property type="protein sequence ID" value="AAC74473"/>
    <property type="gene ID" value="b1391"/>
</dbReference>
<dbReference type="GeneID" id="945959"/>
<dbReference type="KEGG" id="ecj:JW5217"/>
<dbReference type="KEGG" id="eco:b1391"/>
<dbReference type="KEGG" id="ecoc:C3026_08120"/>
<dbReference type="PATRIC" id="fig|1411691.4.peg.880"/>
<dbReference type="EchoBASE" id="EB3501"/>
<dbReference type="eggNOG" id="COG2151">
    <property type="taxonomic scope" value="Bacteria"/>
</dbReference>
<dbReference type="HOGENOM" id="CLU_082133_0_0_6"/>
<dbReference type="InParanoid" id="P76080"/>
<dbReference type="OMA" id="EPFDHFK"/>
<dbReference type="OrthoDB" id="3684942at2"/>
<dbReference type="PhylomeDB" id="P76080"/>
<dbReference type="BioCyc" id="EcoCyc:G6712-MONOMER"/>
<dbReference type="UniPathway" id="UPA00930"/>
<dbReference type="PRO" id="PR:P76080"/>
<dbReference type="Proteomes" id="UP000000625">
    <property type="component" value="Chromosome"/>
</dbReference>
<dbReference type="GO" id="GO:0010124">
    <property type="term" value="P:phenylacetate catabolic process"/>
    <property type="evidence" value="ECO:0000315"/>
    <property type="project" value="UniProtKB"/>
</dbReference>
<dbReference type="Gene3D" id="3.30.300.130">
    <property type="entry name" value="Fe-S cluster assembly (FSCA)"/>
    <property type="match status" value="1"/>
</dbReference>
<dbReference type="InterPro" id="IPR052339">
    <property type="entry name" value="Fe-S_Maturation_MIP18"/>
</dbReference>
<dbReference type="InterPro" id="IPR034904">
    <property type="entry name" value="FSCA_dom_sf"/>
</dbReference>
<dbReference type="InterPro" id="IPR002744">
    <property type="entry name" value="MIP18-like"/>
</dbReference>
<dbReference type="InterPro" id="IPR011883">
    <property type="entry name" value="PaaD-like"/>
</dbReference>
<dbReference type="InterPro" id="IPR056572">
    <property type="entry name" value="Zn_ribbon_PaaD"/>
</dbReference>
<dbReference type="NCBIfam" id="TIGR02159">
    <property type="entry name" value="PA_CoA_Oxy4"/>
    <property type="match status" value="1"/>
</dbReference>
<dbReference type="PANTHER" id="PTHR42831:SF3">
    <property type="entry name" value="1,2-PHENYLACETYL-COA EPOXIDASE, SUBUNIT D-RELATED"/>
    <property type="match status" value="1"/>
</dbReference>
<dbReference type="PANTHER" id="PTHR42831">
    <property type="entry name" value="FE-S PROTEIN MATURATION AUXILIARY FACTOR YITW"/>
    <property type="match status" value="1"/>
</dbReference>
<dbReference type="Pfam" id="PF01883">
    <property type="entry name" value="FeS_assembly_P"/>
    <property type="match status" value="1"/>
</dbReference>
<dbReference type="Pfam" id="PF23451">
    <property type="entry name" value="Zn_ribbon_PaaD"/>
    <property type="match status" value="1"/>
</dbReference>
<dbReference type="SUPFAM" id="SSF117916">
    <property type="entry name" value="Fe-S cluster assembly (FSCA) domain-like"/>
    <property type="match status" value="1"/>
</dbReference>
<feature type="chain" id="PRO_0000058162" description="Putative 1,2-phenylacetyl-CoA epoxidase, subunit D">
    <location>
        <begin position="1"/>
        <end position="165"/>
    </location>
</feature>
<feature type="sequence variant" description="In strain: W.">
    <original>G</original>
    <variation>E</variation>
    <location>
        <position position="47"/>
    </location>
</feature>
<feature type="sequence variant" description="In strain: W.">
    <original>N</original>
    <variation>H</variation>
    <location>
        <position position="76"/>
    </location>
</feature>
<feature type="sequence variant" description="In strain: W.">
    <original>E</original>
    <variation>Q</variation>
    <location>
        <position position="106"/>
    </location>
</feature>
<keyword id="KW-1185">Reference proteome</keyword>
<protein>
    <recommendedName>
        <fullName>Putative 1,2-phenylacetyl-CoA epoxidase, subunit D</fullName>
    </recommendedName>
    <alternativeName>
        <fullName>1,2-phenylacetyl-CoA monooxygenase, subunit D</fullName>
    </alternativeName>
</protein>
<reference key="1">
    <citation type="journal article" date="1998" name="J. Biol. Chem.">
        <title>Catabolism of phenylacetic acid in Escherichia coli. Characterization of a new aerobic hybrid pathway.</title>
        <authorList>
            <person name="Ferrandez A."/>
            <person name="Minambres B."/>
            <person name="Garcia B."/>
            <person name="Olivera E.R."/>
            <person name="Luengo J.M."/>
            <person name="Garcia J.L."/>
            <person name="Diaz E."/>
        </authorList>
    </citation>
    <scope>NUCLEOTIDE SEQUENCE [GENOMIC DNA]</scope>
    <scope>FUNCTION IN PHENYLACETATE CATABOLISM</scope>
    <scope>INDUCTION</scope>
    <source>
        <strain>W / ATCC 11105 / DSM 1900</strain>
    </source>
</reference>
<reference key="2">
    <citation type="journal article" date="1997" name="Science">
        <title>The complete genome sequence of Escherichia coli K-12.</title>
        <authorList>
            <person name="Blattner F.R."/>
            <person name="Plunkett G. III"/>
            <person name="Bloch C.A."/>
            <person name="Perna N.T."/>
            <person name="Burland V."/>
            <person name="Riley M."/>
            <person name="Collado-Vides J."/>
            <person name="Glasner J.D."/>
            <person name="Rode C.K."/>
            <person name="Mayhew G.F."/>
            <person name="Gregor J."/>
            <person name="Davis N.W."/>
            <person name="Kirkpatrick H.A."/>
            <person name="Goeden M.A."/>
            <person name="Rose D.J."/>
            <person name="Mau B."/>
            <person name="Shao Y."/>
        </authorList>
    </citation>
    <scope>NUCLEOTIDE SEQUENCE [LARGE SCALE GENOMIC DNA]</scope>
    <source>
        <strain>K12 / MG1655 / ATCC 47076</strain>
    </source>
</reference>
<reference key="3">
    <citation type="journal article" date="2006" name="Mol. Syst. Biol.">
        <title>Highly accurate genome sequences of Escherichia coli K-12 strains MG1655 and W3110.</title>
        <authorList>
            <person name="Hayashi K."/>
            <person name="Morooka N."/>
            <person name="Yamamoto Y."/>
            <person name="Fujita K."/>
            <person name="Isono K."/>
            <person name="Choi S."/>
            <person name="Ohtsubo E."/>
            <person name="Baba T."/>
            <person name="Wanner B.L."/>
            <person name="Mori H."/>
            <person name="Horiuchi T."/>
        </authorList>
    </citation>
    <scope>NUCLEOTIDE SEQUENCE [LARGE SCALE GENOMIC DNA]</scope>
    <source>
        <strain>K12 / W3110 / ATCC 27325 / DSM 5911</strain>
    </source>
</reference>
<reference key="4">
    <citation type="journal article" date="2000" name="J. Biol. Chem.">
        <title>Transcriptional regulation of the divergent paa catabolic operons for phenylacetic acid degradation in Escherichia coli.</title>
        <authorList>
            <person name="Ferrandez A."/>
            <person name="Garcia J.L."/>
            <person name="Diaz E."/>
        </authorList>
    </citation>
    <scope>TRANSCRIPTIONAL REGULATION</scope>
</reference>
<reference key="5">
    <citation type="journal article" date="2006" name="Appl. Environ. Microbiol.">
        <title>Genetic characterization of the phenylacetyl-coenzyme A oxygenase from the aerobic phenylacetic acid degradation pathway of Escherichia coli.</title>
        <authorList>
            <person name="Fernandez C."/>
            <person name="Ferrandez A."/>
            <person name="Minambres B."/>
            <person name="Diaz E."/>
            <person name="Garcia J.L."/>
        </authorList>
    </citation>
    <scope>FUNCTION AS A POSSIBLE MONOOXYGENASE COMPONENT</scope>
</reference>
<reference key="6">
    <citation type="journal article" date="2011" name="J. Biol. Chem.">
        <title>Structural and functional studies of the Escherichia coli phenylacetyl-CoA monooxygenase complex.</title>
        <authorList>
            <person name="Grishin A.M."/>
            <person name="Ajamian E."/>
            <person name="Tao L."/>
            <person name="Zhang L."/>
            <person name="Menard R."/>
            <person name="Cygler M."/>
        </authorList>
    </citation>
    <scope>SUBUNIT</scope>
</reference>
<sequence>MQRLATIAPPQVHEIWALLSQIPDPEIPVLTITDLGMVRNVTQMGEGWVIGFTPTYSGCPATEHLIGAIREAMTTNGFTPVQVVLQLDPAWTTDWMTPDARERLREYGISPPAGHSCHAHLPPEVRCPRCASVHTTLISEFGSTACKALYRCDSCREPFDYFKCI</sequence>
<evidence type="ECO:0000269" key="1">
    <source>
    </source>
</evidence>
<evidence type="ECO:0000269" key="2">
    <source>
    </source>
</evidence>
<evidence type="ECO:0000269" key="3">
    <source>
    </source>
</evidence>
<evidence type="ECO:0000269" key="4">
    <source>
    </source>
</evidence>
<evidence type="ECO:0000305" key="5"/>
<proteinExistence type="evidence at protein level"/>